<dbReference type="EMBL" id="AF091095">
    <property type="protein sequence ID" value="AAD08679.1"/>
    <property type="molecule type" value="mRNA"/>
</dbReference>
<dbReference type="EMBL" id="AB006572">
    <property type="protein sequence ID" value="BAA34781.1"/>
    <property type="molecule type" value="mRNA"/>
</dbReference>
<dbReference type="EMBL" id="AK292170">
    <property type="protein sequence ID" value="BAF84859.1"/>
    <property type="molecule type" value="mRNA"/>
</dbReference>
<dbReference type="EMBL" id="AC008507">
    <property type="status" value="NOT_ANNOTATED_CDS"/>
    <property type="molecule type" value="mRNA"/>
</dbReference>
<dbReference type="EMBL" id="BC026184">
    <property type="protein sequence ID" value="AAH26184.2"/>
    <property type="status" value="ALT_INIT"/>
    <property type="molecule type" value="mRNA"/>
</dbReference>
<dbReference type="CCDS" id="CCDS12420.1">
    <molecule id="O94763-1"/>
</dbReference>
<dbReference type="CCDS" id="CCDS58658.1">
    <molecule id="O94763-4"/>
</dbReference>
<dbReference type="RefSeq" id="NP_001239570.1">
    <molecule id="O94763-4"/>
    <property type="nucleotide sequence ID" value="NM_001252641.2"/>
</dbReference>
<dbReference type="RefSeq" id="NP_003787.2">
    <molecule id="O94763-1"/>
    <property type="nucleotide sequence ID" value="NM_003796.3"/>
</dbReference>
<dbReference type="RefSeq" id="XP_047295551.1">
    <molecule id="O94763-2"/>
    <property type="nucleotide sequence ID" value="XM_047439595.1"/>
</dbReference>
<dbReference type="SMR" id="O94763"/>
<dbReference type="BioGRID" id="114264">
    <property type="interactions" value="160"/>
</dbReference>
<dbReference type="ComplexPortal" id="CPX-6144">
    <property type="entry name" value="Prefoldin co-chaperone complex, URI1 variant"/>
</dbReference>
<dbReference type="CORUM" id="O94763"/>
<dbReference type="FunCoup" id="O94763">
    <property type="interactions" value="2678"/>
</dbReference>
<dbReference type="IntAct" id="O94763">
    <property type="interactions" value="95"/>
</dbReference>
<dbReference type="MINT" id="O94763"/>
<dbReference type="STRING" id="9606.ENSP00000376097"/>
<dbReference type="GlyGen" id="O94763">
    <property type="glycosylation" value="3 sites, 1 O-linked glycan (3 sites)"/>
</dbReference>
<dbReference type="iPTMnet" id="O94763"/>
<dbReference type="MetOSite" id="O94763"/>
<dbReference type="PhosphoSitePlus" id="O94763"/>
<dbReference type="SwissPalm" id="O94763"/>
<dbReference type="BioMuta" id="URI1"/>
<dbReference type="jPOST" id="O94763"/>
<dbReference type="MassIVE" id="O94763"/>
<dbReference type="PaxDb" id="9606-ENSP00000376097"/>
<dbReference type="PeptideAtlas" id="O94763"/>
<dbReference type="ProteomicsDB" id="43496"/>
<dbReference type="ProteomicsDB" id="50428">
    <molecule id="O94763-1"/>
</dbReference>
<dbReference type="ProteomicsDB" id="50429">
    <molecule id="O94763-2"/>
</dbReference>
<dbReference type="ProteomicsDB" id="50430">
    <molecule id="O94763-3"/>
</dbReference>
<dbReference type="Pumba" id="O94763"/>
<dbReference type="Antibodypedia" id="28848">
    <property type="antibodies" value="226 antibodies from 33 providers"/>
</dbReference>
<dbReference type="DNASU" id="8725"/>
<dbReference type="Ensembl" id="ENST00000360605.8">
    <molecule id="O94763-4"/>
    <property type="protein sequence ID" value="ENSP00000353817.4"/>
    <property type="gene ID" value="ENSG00000105176.18"/>
</dbReference>
<dbReference type="Ensembl" id="ENST00000392271.6">
    <molecule id="O94763-1"/>
    <property type="protein sequence ID" value="ENSP00000376097.2"/>
    <property type="gene ID" value="ENSG00000105176.18"/>
</dbReference>
<dbReference type="GeneID" id="8725"/>
<dbReference type="KEGG" id="hsa:8725"/>
<dbReference type="MANE-Select" id="ENST00000392271.6">
    <property type="protein sequence ID" value="ENSP00000376097.2"/>
    <property type="RefSeq nucleotide sequence ID" value="NM_003796.3"/>
    <property type="RefSeq protein sequence ID" value="NP_003787.2"/>
</dbReference>
<dbReference type="UCSC" id="uc002nsq.4">
    <molecule id="O94763-1"/>
    <property type="organism name" value="human"/>
</dbReference>
<dbReference type="AGR" id="HGNC:13236"/>
<dbReference type="CTD" id="8725"/>
<dbReference type="DisGeNET" id="8725"/>
<dbReference type="GeneCards" id="URI1"/>
<dbReference type="HGNC" id="HGNC:13236">
    <property type="gene designation" value="URI1"/>
</dbReference>
<dbReference type="HPA" id="ENSG00000105176">
    <property type="expression patterns" value="Low tissue specificity"/>
</dbReference>
<dbReference type="MIM" id="603494">
    <property type="type" value="gene"/>
</dbReference>
<dbReference type="neXtProt" id="NX_O94763"/>
<dbReference type="OpenTargets" id="ENSG00000105176"/>
<dbReference type="PharmGKB" id="PA134962614"/>
<dbReference type="VEuPathDB" id="HostDB:ENSG00000105176"/>
<dbReference type="eggNOG" id="KOG3130">
    <property type="taxonomic scope" value="Eukaryota"/>
</dbReference>
<dbReference type="GeneTree" id="ENSGT00390000002362"/>
<dbReference type="HOGENOM" id="CLU_029262_0_0_1"/>
<dbReference type="InParanoid" id="O94763"/>
<dbReference type="OMA" id="HWKKVDD"/>
<dbReference type="OrthoDB" id="21413at2759"/>
<dbReference type="PAN-GO" id="O94763">
    <property type="GO annotations" value="5 GO annotations based on evolutionary models"/>
</dbReference>
<dbReference type="PhylomeDB" id="O94763"/>
<dbReference type="TreeFam" id="TF332816"/>
<dbReference type="PathwayCommons" id="O94763"/>
<dbReference type="SignaLink" id="O94763"/>
<dbReference type="SIGNOR" id="O94763"/>
<dbReference type="BioGRID-ORCS" id="8725">
    <property type="hits" value="693 hits in 1171 CRISPR screens"/>
</dbReference>
<dbReference type="ChiTaRS" id="URI1">
    <property type="organism name" value="human"/>
</dbReference>
<dbReference type="GeneWiki" id="C19orf2"/>
<dbReference type="GenomeRNAi" id="8725"/>
<dbReference type="Pharos" id="O94763">
    <property type="development level" value="Tbio"/>
</dbReference>
<dbReference type="PRO" id="PR:O94763"/>
<dbReference type="Proteomes" id="UP000005640">
    <property type="component" value="Chromosome 19"/>
</dbReference>
<dbReference type="RNAct" id="O94763">
    <property type="molecule type" value="protein"/>
</dbReference>
<dbReference type="Bgee" id="ENSG00000105176">
    <property type="expression patterns" value="Expressed in adrenal tissue and 206 other cell types or tissues"/>
</dbReference>
<dbReference type="ExpressionAtlas" id="O94763">
    <property type="expression patterns" value="baseline and differential"/>
</dbReference>
<dbReference type="GO" id="GO:0005737">
    <property type="term" value="C:cytoplasm"/>
    <property type="evidence" value="ECO:0000314"/>
    <property type="project" value="UniProtKB"/>
</dbReference>
<dbReference type="GO" id="GO:0005829">
    <property type="term" value="C:cytosol"/>
    <property type="evidence" value="ECO:0000314"/>
    <property type="project" value="HPA"/>
</dbReference>
<dbReference type="GO" id="GO:0030425">
    <property type="term" value="C:dendrite"/>
    <property type="evidence" value="ECO:0007669"/>
    <property type="project" value="UniProtKB-SubCell"/>
</dbReference>
<dbReference type="GO" id="GO:0005739">
    <property type="term" value="C:mitochondrion"/>
    <property type="evidence" value="ECO:0007669"/>
    <property type="project" value="UniProtKB-SubCell"/>
</dbReference>
<dbReference type="GO" id="GO:0005654">
    <property type="term" value="C:nucleoplasm"/>
    <property type="evidence" value="ECO:0000314"/>
    <property type="project" value="HPA"/>
</dbReference>
<dbReference type="GO" id="GO:0005634">
    <property type="term" value="C:nucleus"/>
    <property type="evidence" value="ECO:0000314"/>
    <property type="project" value="UniProtKB"/>
</dbReference>
<dbReference type="GO" id="GO:0101031">
    <property type="term" value="C:protein folding chaperone complex"/>
    <property type="evidence" value="ECO:0000303"/>
    <property type="project" value="ComplexPortal"/>
</dbReference>
<dbReference type="GO" id="GO:1990062">
    <property type="term" value="C:RPAP3/R2TP/prefoldin-like complex"/>
    <property type="evidence" value="ECO:0000353"/>
    <property type="project" value="ComplexPortal"/>
</dbReference>
<dbReference type="GO" id="GO:0003682">
    <property type="term" value="F:chromatin binding"/>
    <property type="evidence" value="ECO:0000314"/>
    <property type="project" value="UniProtKB"/>
</dbReference>
<dbReference type="GO" id="GO:0019212">
    <property type="term" value="F:phosphatase inhibitor activity"/>
    <property type="evidence" value="ECO:0000318"/>
    <property type="project" value="GO_Central"/>
</dbReference>
<dbReference type="GO" id="GO:0051219">
    <property type="term" value="F:phosphoprotein binding"/>
    <property type="evidence" value="ECO:0000353"/>
    <property type="project" value="UniProtKB"/>
</dbReference>
<dbReference type="GO" id="GO:0004864">
    <property type="term" value="F:protein phosphatase inhibitor activity"/>
    <property type="evidence" value="ECO:0007669"/>
    <property type="project" value="UniProtKB-KW"/>
</dbReference>
<dbReference type="GO" id="GO:0000993">
    <property type="term" value="F:RNA polymerase II complex binding"/>
    <property type="evidence" value="ECO:0000314"/>
    <property type="project" value="UniProtKB"/>
</dbReference>
<dbReference type="GO" id="GO:0003714">
    <property type="term" value="F:transcription corepressor activity"/>
    <property type="evidence" value="ECO:0000314"/>
    <property type="project" value="UniProtKB"/>
</dbReference>
<dbReference type="GO" id="GO:0071363">
    <property type="term" value="P:cellular response to growth factor stimulus"/>
    <property type="evidence" value="ECO:0000314"/>
    <property type="project" value="UniProtKB"/>
</dbReference>
<dbReference type="GO" id="GO:0071383">
    <property type="term" value="P:cellular response to steroid hormone stimulus"/>
    <property type="evidence" value="ECO:0000314"/>
    <property type="project" value="UniProtKB"/>
</dbReference>
<dbReference type="GO" id="GO:0042771">
    <property type="term" value="P:intrinsic apoptotic signaling pathway in response to DNA damage by p53 class mediator"/>
    <property type="evidence" value="ECO:0000318"/>
    <property type="project" value="GO_Central"/>
</dbReference>
<dbReference type="GO" id="GO:2001243">
    <property type="term" value="P:negative regulation of intrinsic apoptotic signaling pathway"/>
    <property type="evidence" value="ECO:0000315"/>
    <property type="project" value="UniProtKB"/>
</dbReference>
<dbReference type="GO" id="GO:0010923">
    <property type="term" value="P:negative regulation of phosphatase activity"/>
    <property type="evidence" value="ECO:0000315"/>
    <property type="project" value="UniProtKB"/>
</dbReference>
<dbReference type="GO" id="GO:0000122">
    <property type="term" value="P:negative regulation of transcription by RNA polymerase II"/>
    <property type="evidence" value="ECO:0000314"/>
    <property type="project" value="UniProtKB"/>
</dbReference>
<dbReference type="GO" id="GO:0050821">
    <property type="term" value="P:protein stabilization"/>
    <property type="evidence" value="ECO:0000303"/>
    <property type="project" value="ComplexPortal"/>
</dbReference>
<dbReference type="GO" id="GO:0001558">
    <property type="term" value="P:regulation of cell growth"/>
    <property type="evidence" value="ECO:0000314"/>
    <property type="project" value="UniProtKB"/>
</dbReference>
<dbReference type="GO" id="GO:0006357">
    <property type="term" value="P:regulation of transcription by RNA polymerase II"/>
    <property type="evidence" value="ECO:0000315"/>
    <property type="project" value="UniProtKB"/>
</dbReference>
<dbReference type="GO" id="GO:0009615">
    <property type="term" value="P:response to virus"/>
    <property type="evidence" value="ECO:0000315"/>
    <property type="project" value="UniProtKB"/>
</dbReference>
<dbReference type="CDD" id="cd23159">
    <property type="entry name" value="Prefoldin_URI1"/>
    <property type="match status" value="1"/>
</dbReference>
<dbReference type="FunFam" id="1.10.287.370:FF:000008">
    <property type="entry name" value="unconventional prefoldin RPB5 interactor 1"/>
    <property type="match status" value="1"/>
</dbReference>
<dbReference type="Gene3D" id="1.10.287.370">
    <property type="match status" value="1"/>
</dbReference>
<dbReference type="InterPro" id="IPR009053">
    <property type="entry name" value="Prefoldin"/>
</dbReference>
<dbReference type="InterPro" id="IPR004127">
    <property type="entry name" value="Prefoldin_subunit_alpha"/>
</dbReference>
<dbReference type="InterPro" id="IPR052255">
    <property type="entry name" value="RNA_pol_II_subunit5-mediator"/>
</dbReference>
<dbReference type="PANTHER" id="PTHR15111">
    <property type="entry name" value="RNA POLYMERASE II SUBUNIT 5-MEDIATING PROTEIN NNX3"/>
    <property type="match status" value="1"/>
</dbReference>
<dbReference type="PANTHER" id="PTHR15111:SF0">
    <property type="entry name" value="UNCONVENTIONAL PREFOLDIN RPB5 INTERACTOR 1"/>
    <property type="match status" value="1"/>
</dbReference>
<dbReference type="Pfam" id="PF02996">
    <property type="entry name" value="Prefoldin"/>
    <property type="match status" value="1"/>
</dbReference>
<dbReference type="SUPFAM" id="SSF46579">
    <property type="entry name" value="Prefoldin"/>
    <property type="match status" value="1"/>
</dbReference>
<gene>
    <name type="primary">URI1</name>
    <name type="synonym">C19orf2</name>
    <name type="synonym">NNX3</name>
    <name type="synonym">PPP1R19</name>
    <name type="synonym">RMP</name>
    <name type="synonym">URI</name>
</gene>
<sequence>MEAPTVETPPDPSPPSAPAPALVPLRAPDVARLREEQEKVVTNCQERIQHWKKVDNDYNALRERLSTLPDKLSYNIMVPFGPFAFMPGKLVHTNEVTVLLGDNWFAKCSAKQAVGLVEHRKEHVRKTIDDLKKVMKNFESRVEFTEDLQKMSDAAGDIVDIREEIKCDFEFKAKHRIAHKPHSKPKTSDIFEADIANDVKSKDLLADKELWARLEELERQEELLGELDSKPDTVIANGEDTTSSEEEKEDRNTNVNAMHQVTDSHTPCHKDVASSEPFSGQVNSQLNCSVNGSSSYHSDDDDDDDDDDDDDNIDDDDGDNDHEALGVGDNSIPTIYFSHTVEPKRVRINTGKNTTLKFSEKKEEAKRKRKNSTGSGHSAQELPTIRTPADIYRAFVDVVNGEYVPRKSILKSRSRENSVCSDTSESSAAEFDDRRGVLRSISCEEATCSDTSESILEEEPQENQKKLLPLSVTPEAFSGTVIEKEFVSPSLTPPPAIAHPALPTIPERKEVLLEASEETGKRVSKFKAARLQQKD</sequence>
<comment type="function">
    <text>Involved in gene transcription regulation. Acts as a transcriptional repressor in concert with the corepressor UXT to regulate androgen receptor (AR) transcription. May act as a tumor suppressor to repress AR-mediated gene transcription and to inhibit anchorage-independent growth in prostate cancer cells. Required for cell survival in ovarian cancer cells. Together with UXT, associates with chromatin to the NKX3-1 promoter region. Antagonizes transcriptional modulation via hepatitis B virus X protein.</text>
</comment>
<comment type="function">
    <text>Plays a central role in maintaining S6K1 signaling and BAD phosphorylation under normal growth conditions thereby protecting cells from potential deleterious effects of sustained S6K1 signaling. The URI1-PPP1CC complex acts as a central component of a negative feedback mechanism that counteracts excessive S6K1 survival signaling to BAD in response to growth factors. Mediates inhibition of PPP1CC phosphatase activity in mitochondria. Coordinates the regulation of nutrient-sensitive gene expression availability in a mTOR-dependent manner. Seems to be a scaffolding protein able to assemble a prefoldin-like complex that contains PFDs and proteins with roles in transcription and ubiquitination.</text>
</comment>
<comment type="subunit">
    <text evidence="3 4 5 7 8 9 10 11">Homodimer. Component of the PAQosome complex which is responsible for the biogenesis of several protein complexes and which consists of R2TP complex members RUVBL1, RUVBL2, RPAP3 and PIH1D1, URI complex members PFDN2, PFDN6, PDRG1, UXT and URI1 as well as ASDURF, POLR2E and DNAAF10/WDR92 (PubMed:31738558). Interacts with POLR2E/RPB5, RUVBL2 and RUVBL1 (PubMed:14615539, PubMed:9819440). Interacts with PFDN2, PFDN4 and STAP1; the interactions are phosphorylation-dependent and occur in a growth-dependent manner in the mitochondrion (PubMed:14615539). Interacts with UXT (PubMed:21730289). Interacts with PPP1CC; the interaction is phosphorylation-dependent and occurs in a growth factor-dependent manner (PubMed:21397856). Interacts (via the middle C-terminal region) with GTF2F1 and GTF2F2 (PubMed:12737519). Interacts with DMAP1 (PubMed:15367675). Interacts with TSC1 and TSC2 (PubMed:28561026). Interacts with PRPF8 and EFTUD2 in a ZNHIT2-dependent manner (PubMed:28561026).</text>
</comment>
<comment type="interaction">
    <interactant intactId="EBI-357067">
        <id>O94763</id>
    </interactant>
    <interactant intactId="EBI-457886">
        <id>P35269</id>
        <label>GTF2F1</label>
    </interactant>
    <organismsDiffer>false</organismsDiffer>
    <experiments>3</experiments>
</comment>
<comment type="interaction">
    <interactant intactId="EBI-357067">
        <id>O94763</id>
    </interactant>
    <interactant intactId="EBI-1030560">
        <id>P13984</id>
        <label>GTF2F2</label>
    </interactant>
    <organismsDiffer>false</organismsDiffer>
    <experiments>4</experiments>
</comment>
<comment type="interaction">
    <interactant intactId="EBI-357067">
        <id>O94763</id>
    </interactant>
    <interactant intactId="EBI-539828">
        <id>O15294</id>
        <label>OGT</label>
    </interactant>
    <organismsDiffer>false</organismsDiffer>
    <experiments>10</experiments>
</comment>
<comment type="interaction">
    <interactant intactId="EBI-357067">
        <id>O94763</id>
    </interactant>
    <interactant intactId="EBI-359873">
        <id>Q9UHV9</id>
        <label>PFDN2</label>
    </interactant>
    <organismsDiffer>false</organismsDiffer>
    <experiments>4</experiments>
</comment>
<comment type="interaction">
    <interactant intactId="EBI-357067">
        <id>O94763</id>
    </interactant>
    <interactant intactId="EBI-395189">
        <id>P19388</id>
        <label>POLR2E</label>
    </interactant>
    <organismsDiffer>false</organismsDiffer>
    <experiments>5</experiments>
</comment>
<comment type="interaction">
    <interactant intactId="EBI-357067">
        <id>O94763</id>
    </interactant>
    <interactant intactId="EBI-356283">
        <id>P36873</id>
        <label>PPP1CC</label>
    </interactant>
    <organismsDiffer>false</organismsDiffer>
    <experiments>20</experiments>
</comment>
<comment type="interaction">
    <interactant intactId="EBI-357067">
        <id>O94763</id>
    </interactant>
    <interactant intactId="EBI-1049387">
        <id>Q15185</id>
        <label>PTGES3</label>
    </interactant>
    <organismsDiffer>false</organismsDiffer>
    <experiments>3</experiments>
</comment>
<comment type="interaction">
    <interactant intactId="EBI-357067">
        <id>O94763</id>
    </interactant>
    <interactant intactId="EBI-356928">
        <id>Q9H6T3</id>
        <label>RPAP3</label>
    </interactant>
    <organismsDiffer>false</organismsDiffer>
    <experiments>4</experiments>
</comment>
<comment type="interaction">
    <interactant intactId="EBI-357067">
        <id>O94763</id>
    </interactant>
    <interactant intactId="EBI-78863">
        <id>P30561</id>
        <label>Ahr</label>
    </interactant>
    <organismsDiffer>true</organismsDiffer>
    <experiments>2</experiments>
</comment>
<comment type="interaction">
    <interactant intactId="EBI-357067">
        <id>O94763</id>
    </interactant>
    <interactant intactId="EBI-346765">
        <id>P19785</id>
        <label>Esr1</label>
    </interactant>
    <organismsDiffer>true</organismsDiffer>
    <experiments>2</experiments>
</comment>
<comment type="interaction">
    <interactant intactId="EBI-12590720">
        <id>O94763-1</id>
    </interactant>
    <interactant intactId="EBI-539828">
        <id>O15294</id>
        <label>OGT</label>
    </interactant>
    <organismsDiffer>false</organismsDiffer>
    <experiments>3</experiments>
</comment>
<comment type="interaction">
    <interactant intactId="EBI-12590720">
        <id>O94763-1</id>
    </interactant>
    <interactant intactId="EBI-356283">
        <id>P36873</id>
        <label>PPP1CC</label>
    </interactant>
    <organismsDiffer>false</organismsDiffer>
    <experiments>8</experiments>
</comment>
<comment type="subcellular location">
    <subcellularLocation>
        <location>Nucleus</location>
    </subcellularLocation>
    <subcellularLocation>
        <location>Cytoplasm</location>
    </subcellularLocation>
    <subcellularLocation>
        <location>Mitochondrion</location>
    </subcellularLocation>
    <subcellularLocation>
        <location evidence="1">Cell projection</location>
        <location evidence="1">Dendrite</location>
    </subcellularLocation>
    <text>Colocalizes with PFDN2, PFDN4, PPP1CC, RPS6KB1 and STAP1 at mitochondrion.</text>
</comment>
<comment type="alternative products">
    <event type="alternative splicing"/>
    <isoform>
        <id>O94763-1</id>
        <name>1</name>
        <sequence type="displayed"/>
    </isoform>
    <isoform>
        <id>O94763-2</id>
        <name>2</name>
        <sequence type="described" ref="VSP_032773"/>
    </isoform>
    <isoform>
        <id>O94763-3</id>
        <name>3</name>
        <sequence type="described" ref="VSP_042259"/>
    </isoform>
    <isoform>
        <id>O94763-4</id>
        <name>4</name>
        <sequence type="described" ref="VSP_044769 VSP_044770"/>
    </isoform>
</comment>
<comment type="tissue specificity">
    <text evidence="7 8 11 12">Ubiquitous. Expressed in ovarian cancers (at protein level). Expressed strongly in skeletal muscle. Expressed weakly in brain, heart, pancreas and in prostate epithelial cells.</text>
</comment>
<comment type="PTM">
    <text evidence="6 7 8 12">Phosphorylated. Phosphorylation occurs essentially on serine residues. Phosphorylation occurs in response to androgen treatment in prostate cancer cells in a mTOR-dependent manner. Phosphorylated; hyperhosphorylated in mitochondria in a mTORC-dependent signaling pathway. Phosphorylated at Ser-372 by RPS6KB1 in a growth factor- and rapamycin-dependent manner. S6K1-mediated mitochondrial phosphorylation at Ser-372 disrupts the URI1-PPP1CC complex in the mitochondrion, relieves PPP1CC phosphatase inhibition activity and hence engages a negative feedback diminishing RPS6KB1 kinase activity, preventing sustained S6K1-dependent signaling.</text>
</comment>
<comment type="similarity">
    <text evidence="16">Belongs to the RNA polymerase II subunit 5-mediating protein family.</text>
</comment>
<comment type="sequence caution" evidence="16">
    <conflict type="erroneous initiation">
        <sequence resource="EMBL-CDS" id="AAH26184"/>
    </conflict>
    <text>Extended N-terminus.</text>
</comment>
<accession>O94763</accession>
<accession>A8K805</accession>
<accession>H7BY42</accession>
<accession>Q8TC23</accession>
<accession>Q9UNU3</accession>
<feature type="chain" id="PRO_0000097365" description="Unconventional prefoldin RPB5 interactor 1">
    <location>
        <begin position="1"/>
        <end position="535"/>
    </location>
</feature>
<feature type="region of interest" description="Disordered" evidence="2">
    <location>
        <begin position="1"/>
        <end position="23"/>
    </location>
</feature>
<feature type="region of interest" description="Disordered" evidence="2">
    <location>
        <begin position="223"/>
        <end position="330"/>
    </location>
</feature>
<feature type="region of interest" description="Disordered" evidence="2">
    <location>
        <begin position="352"/>
        <end position="383"/>
    </location>
</feature>
<feature type="region of interest" description="Disordered" evidence="2">
    <location>
        <begin position="412"/>
        <end position="431"/>
    </location>
</feature>
<feature type="compositionally biased region" description="Pro residues" evidence="2">
    <location>
        <begin position="7"/>
        <end position="18"/>
    </location>
</feature>
<feature type="compositionally biased region" description="Polar residues" evidence="2">
    <location>
        <begin position="253"/>
        <end position="265"/>
    </location>
</feature>
<feature type="compositionally biased region" description="Polar residues" evidence="2">
    <location>
        <begin position="276"/>
        <end position="296"/>
    </location>
</feature>
<feature type="compositionally biased region" description="Acidic residues" evidence="2">
    <location>
        <begin position="299"/>
        <end position="320"/>
    </location>
</feature>
<feature type="compositionally biased region" description="Polar residues" evidence="2">
    <location>
        <begin position="417"/>
        <end position="427"/>
    </location>
</feature>
<feature type="modified residue" description="N-acetylmethionine" evidence="18">
    <location>
        <position position="1"/>
    </location>
</feature>
<feature type="modified residue" description="Phosphoserine; by RPS6KB1" evidence="6 7 17 19">
    <location>
        <position position="372"/>
    </location>
</feature>
<feature type="modified residue" description="Phosphothreonine" evidence="19">
    <location>
        <position position="373"/>
    </location>
</feature>
<feature type="modified residue" description="Phosphoserine" evidence="19">
    <location>
        <position position="442"/>
    </location>
</feature>
<feature type="splice variant" id="VSP_032773" description="In isoform 2." evidence="15">
    <location>
        <begin position="1"/>
        <end position="76"/>
    </location>
</feature>
<feature type="splice variant" id="VSP_042259" description="In isoform 3." evidence="14">
    <original>MEAPTVETPPDPSPPSAPAPALVPLRAPDVARLREEQEKVVTNCQERIQHW</original>
    <variation>MRLGNVDFTLGSNVPCVYLVFSVNR</variation>
    <location>
        <begin position="1"/>
        <end position="51"/>
    </location>
</feature>
<feature type="splice variant" id="VSP_044769" description="In isoform 4." evidence="13">
    <original>MEAPTVETPPDPSPPSAPAPALVPLRAPDVARLREEQEK</original>
    <variation>MTTWSSLQGSHVSKRALAYAL</variation>
    <location>
        <begin position="1"/>
        <end position="39"/>
    </location>
</feature>
<feature type="splice variant" id="VSP_044770" description="In isoform 4." evidence="13">
    <original>AFSGTVIEKEFVSPSLTPPPAIAHPALPTIPERKEVLLEASEETGKRVSKFKAARLQQKD</original>
    <variation>VLRLVGYSRNLAPLNVIL</variation>
    <location>
        <begin position="476"/>
        <end position="535"/>
    </location>
</feature>
<feature type="sequence variant" id="VAR_056978" description="In dbSNP:rs189187.">
    <original>L</original>
    <variation>P</variation>
    <location>
        <position position="22"/>
    </location>
</feature>
<feature type="mutagenesis site" description="Does not lead to dissociation of the URI1-PPP1CC complex. Enhances phosphorylation of RPS6KB1 after IGF1 stimulation. Confers a cell survival increase." evidence="6 7">
    <original>S</original>
    <variation>A</variation>
    <location>
        <position position="372"/>
    </location>
</feature>
<feature type="sequence conflict" description="In Ref. 3; BAF84859." evidence="16" ref="3">
    <original>E</original>
    <variation>G</variation>
    <location>
        <position position="7"/>
    </location>
</feature>
<feature type="sequence conflict" description="In Ref. 5; AAH26184." evidence="16" ref="5">
    <original>D</original>
    <variation>N</variation>
    <location>
        <position position="232"/>
    </location>
</feature>
<feature type="sequence conflict" description="In Ref. 1; AAD08679, 2; BAA34781, 3; BAF84859 and 5; AAH26184." evidence="16" ref="1 2 3 5">
    <location>
        <position position="311"/>
    </location>
</feature>
<feature type="sequence conflict" description="In Ref. 3; BAF84859." evidence="16" ref="3">
    <original>D</original>
    <variation>E</variation>
    <location>
        <position position="315"/>
    </location>
</feature>
<feature type="sequence conflict" description="In Ref. 2; BAA34781." evidence="16" ref="2">
    <original>R</original>
    <variation>G</variation>
    <location>
        <position position="434"/>
    </location>
</feature>
<name>RMP_HUMAN</name>
<evidence type="ECO:0000250" key="1"/>
<evidence type="ECO:0000256" key="2">
    <source>
        <dbReference type="SAM" id="MobiDB-lite"/>
    </source>
</evidence>
<evidence type="ECO:0000269" key="3">
    <source>
    </source>
</evidence>
<evidence type="ECO:0000269" key="4">
    <source>
    </source>
</evidence>
<evidence type="ECO:0000269" key="5">
    <source>
    </source>
</evidence>
<evidence type="ECO:0000269" key="6">
    <source>
    </source>
</evidence>
<evidence type="ECO:0000269" key="7">
    <source>
    </source>
</evidence>
<evidence type="ECO:0000269" key="8">
    <source>
    </source>
</evidence>
<evidence type="ECO:0000269" key="9">
    <source>
    </source>
</evidence>
<evidence type="ECO:0000269" key="10">
    <source>
    </source>
</evidence>
<evidence type="ECO:0000269" key="11">
    <source>
    </source>
</evidence>
<evidence type="ECO:0000269" key="12">
    <source>
    </source>
</evidence>
<evidence type="ECO:0000303" key="13">
    <source>
    </source>
</evidence>
<evidence type="ECO:0000303" key="14">
    <source>
    </source>
</evidence>
<evidence type="ECO:0000303" key="15">
    <source>
    </source>
</evidence>
<evidence type="ECO:0000305" key="16"/>
<evidence type="ECO:0007744" key="17">
    <source>
    </source>
</evidence>
<evidence type="ECO:0007744" key="18">
    <source>
    </source>
</evidence>
<evidence type="ECO:0007744" key="19">
    <source>
    </source>
</evidence>
<organism>
    <name type="scientific">Homo sapiens</name>
    <name type="common">Human</name>
    <dbReference type="NCBI Taxonomy" id="9606"/>
    <lineage>
        <taxon>Eukaryota</taxon>
        <taxon>Metazoa</taxon>
        <taxon>Chordata</taxon>
        <taxon>Craniata</taxon>
        <taxon>Vertebrata</taxon>
        <taxon>Euteleostomi</taxon>
        <taxon>Mammalia</taxon>
        <taxon>Eutheria</taxon>
        <taxon>Euarchontoglires</taxon>
        <taxon>Primates</taxon>
        <taxon>Haplorrhini</taxon>
        <taxon>Catarrhini</taxon>
        <taxon>Hominidae</taxon>
        <taxon>Homo</taxon>
    </lineage>
</organism>
<protein>
    <recommendedName>
        <fullName>Unconventional prefoldin RPB5 interactor 1</fullName>
    </recommendedName>
    <alternativeName>
        <fullName>Protein NNX3</fullName>
    </alternativeName>
    <alternativeName>
        <fullName>Protein phosphatase 1 regulatory subunit 19</fullName>
    </alternativeName>
    <alternativeName>
        <fullName>RNA polymerase II subunit 5-mediating protein</fullName>
        <shortName>RPB5-mediating protein</shortName>
    </alternativeName>
</protein>
<proteinExistence type="evidence at protein level"/>
<keyword id="KW-0007">Acetylation</keyword>
<keyword id="KW-0025">Alternative splicing</keyword>
<keyword id="KW-0966">Cell projection</keyword>
<keyword id="KW-0963">Cytoplasm</keyword>
<keyword id="KW-0496">Mitochondrion</keyword>
<keyword id="KW-0539">Nucleus</keyword>
<keyword id="KW-0553">Oncogene</keyword>
<keyword id="KW-0597">Phosphoprotein</keyword>
<keyword id="KW-0650">Protein phosphatase inhibitor</keyword>
<keyword id="KW-1267">Proteomics identification</keyword>
<keyword id="KW-1185">Reference proteome</keyword>
<keyword id="KW-0678">Repressor</keyword>
<keyword id="KW-0804">Transcription</keyword>
<keyword id="KW-0805">Transcription regulation</keyword>
<reference key="1">
    <citation type="journal article" date="1998" name="Genomics">
        <title>Molecular cloning of a gene on chromosome 19q12 coding for a novel intracellular protein: analysis of expression in human and mouse tissues and in human tumor cells, particularly Reed-Sternberg cells in Hodgkin disease.</title>
        <authorList>
            <person name="Van Leuven F."/>
            <person name="Torrekens S."/>
            <person name="Moechars D."/>
            <person name="Hilliker C."/>
            <person name="Buellens M."/>
            <person name="Bollen M."/>
            <person name="Delabie J."/>
        </authorList>
    </citation>
    <scope>NUCLEOTIDE SEQUENCE [MRNA] (ISOFORM 2)</scope>
    <scope>PHOSPHORYLATION</scope>
    <scope>SUBCELLULAR LOCATION</scope>
    <scope>TISSUE SPECIFICITY</scope>
    <source>
        <tissue>Liver</tissue>
    </source>
</reference>
<reference key="2">
    <citation type="journal article" date="1998" name="Mol. Cell. Biol.">
        <title>RMP, a novel RNA polymerase II subunit 5-interacting protein, counteracts transactivation by hepatitis B virus X protein.</title>
        <authorList>
            <person name="Dorjsuren D."/>
            <person name="Lin Y."/>
            <person name="Wei W."/>
            <person name="Yamashita T."/>
            <person name="Nomura T."/>
            <person name="Hayashi N."/>
            <person name="Murakami S."/>
        </authorList>
    </citation>
    <scope>NUCLEOTIDE SEQUENCE [MRNA] (ISOFORM 3)</scope>
    <scope>INTERACTION WITH POLR2E</scope>
    <scope>TISSUE SPECIFICITY</scope>
    <source>
        <tissue>Hepatoma</tissue>
    </source>
</reference>
<reference key="3">
    <citation type="journal article" date="2004" name="Nat. Genet.">
        <title>Complete sequencing and characterization of 21,243 full-length human cDNAs.</title>
        <authorList>
            <person name="Ota T."/>
            <person name="Suzuki Y."/>
            <person name="Nishikawa T."/>
            <person name="Otsuki T."/>
            <person name="Sugiyama T."/>
            <person name="Irie R."/>
            <person name="Wakamatsu A."/>
            <person name="Hayashi K."/>
            <person name="Sato H."/>
            <person name="Nagai K."/>
            <person name="Kimura K."/>
            <person name="Makita H."/>
            <person name="Sekine M."/>
            <person name="Obayashi M."/>
            <person name="Nishi T."/>
            <person name="Shibahara T."/>
            <person name="Tanaka T."/>
            <person name="Ishii S."/>
            <person name="Yamamoto J."/>
            <person name="Saito K."/>
            <person name="Kawai Y."/>
            <person name="Isono Y."/>
            <person name="Nakamura Y."/>
            <person name="Nagahari K."/>
            <person name="Murakami K."/>
            <person name="Yasuda T."/>
            <person name="Iwayanagi T."/>
            <person name="Wagatsuma M."/>
            <person name="Shiratori A."/>
            <person name="Sudo H."/>
            <person name="Hosoiri T."/>
            <person name="Kaku Y."/>
            <person name="Kodaira H."/>
            <person name="Kondo H."/>
            <person name="Sugawara M."/>
            <person name="Takahashi M."/>
            <person name="Kanda K."/>
            <person name="Yokoi T."/>
            <person name="Furuya T."/>
            <person name="Kikkawa E."/>
            <person name="Omura Y."/>
            <person name="Abe K."/>
            <person name="Kamihara K."/>
            <person name="Katsuta N."/>
            <person name="Sato K."/>
            <person name="Tanikawa M."/>
            <person name="Yamazaki M."/>
            <person name="Ninomiya K."/>
            <person name="Ishibashi T."/>
            <person name="Yamashita H."/>
            <person name="Murakawa K."/>
            <person name="Fujimori K."/>
            <person name="Tanai H."/>
            <person name="Kimata M."/>
            <person name="Watanabe M."/>
            <person name="Hiraoka S."/>
            <person name="Chiba Y."/>
            <person name="Ishida S."/>
            <person name="Ono Y."/>
            <person name="Takiguchi S."/>
            <person name="Watanabe S."/>
            <person name="Yosida M."/>
            <person name="Hotuta T."/>
            <person name="Kusano J."/>
            <person name="Kanehori K."/>
            <person name="Takahashi-Fujii A."/>
            <person name="Hara H."/>
            <person name="Tanase T.-O."/>
            <person name="Nomura Y."/>
            <person name="Togiya S."/>
            <person name="Komai F."/>
            <person name="Hara R."/>
            <person name="Takeuchi K."/>
            <person name="Arita M."/>
            <person name="Imose N."/>
            <person name="Musashino K."/>
            <person name="Yuuki H."/>
            <person name="Oshima A."/>
            <person name="Sasaki N."/>
            <person name="Aotsuka S."/>
            <person name="Yoshikawa Y."/>
            <person name="Matsunawa H."/>
            <person name="Ichihara T."/>
            <person name="Shiohata N."/>
            <person name="Sano S."/>
            <person name="Moriya S."/>
            <person name="Momiyama H."/>
            <person name="Satoh N."/>
            <person name="Takami S."/>
            <person name="Terashima Y."/>
            <person name="Suzuki O."/>
            <person name="Nakagawa S."/>
            <person name="Senoh A."/>
            <person name="Mizoguchi H."/>
            <person name="Goto Y."/>
            <person name="Shimizu F."/>
            <person name="Wakebe H."/>
            <person name="Hishigaki H."/>
            <person name="Watanabe T."/>
            <person name="Sugiyama A."/>
            <person name="Takemoto M."/>
            <person name="Kawakami B."/>
            <person name="Yamazaki M."/>
            <person name="Watanabe K."/>
            <person name="Kumagai A."/>
            <person name="Itakura S."/>
            <person name="Fukuzumi Y."/>
            <person name="Fujimori Y."/>
            <person name="Komiyama M."/>
            <person name="Tashiro H."/>
            <person name="Tanigami A."/>
            <person name="Fujiwara T."/>
            <person name="Ono T."/>
            <person name="Yamada K."/>
            <person name="Fujii Y."/>
            <person name="Ozaki K."/>
            <person name="Hirao M."/>
            <person name="Ohmori Y."/>
            <person name="Kawabata A."/>
            <person name="Hikiji T."/>
            <person name="Kobatake N."/>
            <person name="Inagaki H."/>
            <person name="Ikema Y."/>
            <person name="Okamoto S."/>
            <person name="Okitani R."/>
            <person name="Kawakami T."/>
            <person name="Noguchi S."/>
            <person name="Itoh T."/>
            <person name="Shigeta K."/>
            <person name="Senba T."/>
            <person name="Matsumura K."/>
            <person name="Nakajima Y."/>
            <person name="Mizuno T."/>
            <person name="Morinaga M."/>
            <person name="Sasaki M."/>
            <person name="Togashi T."/>
            <person name="Oyama M."/>
            <person name="Hata H."/>
            <person name="Watanabe M."/>
            <person name="Komatsu T."/>
            <person name="Mizushima-Sugano J."/>
            <person name="Satoh T."/>
            <person name="Shirai Y."/>
            <person name="Takahashi Y."/>
            <person name="Nakagawa K."/>
            <person name="Okumura K."/>
            <person name="Nagase T."/>
            <person name="Nomura N."/>
            <person name="Kikuchi H."/>
            <person name="Masuho Y."/>
            <person name="Yamashita R."/>
            <person name="Nakai K."/>
            <person name="Yada T."/>
            <person name="Nakamura Y."/>
            <person name="Ohara O."/>
            <person name="Isogai T."/>
            <person name="Sugano S."/>
        </authorList>
    </citation>
    <scope>NUCLEOTIDE SEQUENCE [LARGE SCALE MRNA] (ISOFORM 1)</scope>
</reference>
<reference key="4">
    <citation type="journal article" date="2004" name="Nature">
        <title>The DNA sequence and biology of human chromosome 19.</title>
        <authorList>
            <person name="Grimwood J."/>
            <person name="Gordon L.A."/>
            <person name="Olsen A.S."/>
            <person name="Terry A."/>
            <person name="Schmutz J."/>
            <person name="Lamerdin J.E."/>
            <person name="Hellsten U."/>
            <person name="Goodstein D."/>
            <person name="Couronne O."/>
            <person name="Tran-Gyamfi M."/>
            <person name="Aerts A."/>
            <person name="Altherr M."/>
            <person name="Ashworth L."/>
            <person name="Bajorek E."/>
            <person name="Black S."/>
            <person name="Branscomb E."/>
            <person name="Caenepeel S."/>
            <person name="Carrano A.V."/>
            <person name="Caoile C."/>
            <person name="Chan Y.M."/>
            <person name="Christensen M."/>
            <person name="Cleland C.A."/>
            <person name="Copeland A."/>
            <person name="Dalin E."/>
            <person name="Dehal P."/>
            <person name="Denys M."/>
            <person name="Detter J.C."/>
            <person name="Escobar J."/>
            <person name="Flowers D."/>
            <person name="Fotopulos D."/>
            <person name="Garcia C."/>
            <person name="Georgescu A.M."/>
            <person name="Glavina T."/>
            <person name="Gomez M."/>
            <person name="Gonzales E."/>
            <person name="Groza M."/>
            <person name="Hammon N."/>
            <person name="Hawkins T."/>
            <person name="Haydu L."/>
            <person name="Ho I."/>
            <person name="Huang W."/>
            <person name="Israni S."/>
            <person name="Jett J."/>
            <person name="Kadner K."/>
            <person name="Kimball H."/>
            <person name="Kobayashi A."/>
            <person name="Larionov V."/>
            <person name="Leem S.-H."/>
            <person name="Lopez F."/>
            <person name="Lou Y."/>
            <person name="Lowry S."/>
            <person name="Malfatti S."/>
            <person name="Martinez D."/>
            <person name="McCready P.M."/>
            <person name="Medina C."/>
            <person name="Morgan J."/>
            <person name="Nelson K."/>
            <person name="Nolan M."/>
            <person name="Ovcharenko I."/>
            <person name="Pitluck S."/>
            <person name="Pollard M."/>
            <person name="Popkie A.P."/>
            <person name="Predki P."/>
            <person name="Quan G."/>
            <person name="Ramirez L."/>
            <person name="Rash S."/>
            <person name="Retterer J."/>
            <person name="Rodriguez A."/>
            <person name="Rogers S."/>
            <person name="Salamov A."/>
            <person name="Salazar A."/>
            <person name="She X."/>
            <person name="Smith D."/>
            <person name="Slezak T."/>
            <person name="Solovyev V."/>
            <person name="Thayer N."/>
            <person name="Tice H."/>
            <person name="Tsai M."/>
            <person name="Ustaszewska A."/>
            <person name="Vo N."/>
            <person name="Wagner M."/>
            <person name="Wheeler J."/>
            <person name="Wu K."/>
            <person name="Xie G."/>
            <person name="Yang J."/>
            <person name="Dubchak I."/>
            <person name="Furey T.S."/>
            <person name="DeJong P."/>
            <person name="Dickson M."/>
            <person name="Gordon D."/>
            <person name="Eichler E.E."/>
            <person name="Pennacchio L.A."/>
            <person name="Richardson P."/>
            <person name="Stubbs L."/>
            <person name="Rokhsar D.S."/>
            <person name="Myers R.M."/>
            <person name="Rubin E.M."/>
            <person name="Lucas S.M."/>
        </authorList>
    </citation>
    <scope>NUCLEOTIDE SEQUENCE [LARGE SCALE GENOMIC DNA]</scope>
</reference>
<reference key="5">
    <citation type="journal article" date="2004" name="Genome Res.">
        <title>The status, quality, and expansion of the NIH full-length cDNA project: the Mammalian Gene Collection (MGC).</title>
        <authorList>
            <consortium name="The MGC Project Team"/>
        </authorList>
    </citation>
    <scope>NUCLEOTIDE SEQUENCE [LARGE SCALE MRNA] (ISOFORM 4)</scope>
    <source>
        <tissue>Testis</tissue>
    </source>
</reference>
<reference key="6">
    <citation type="journal article" date="2003" name="Cell Res.">
        <title>Interaction with general transcription factor IIF (TFIIF) is required for the suppression of activated transcription by RPB5-mediating protein (RMP).</title>
        <authorList>
            <person name="Wei W."/>
            <person name="Gu J.X."/>
            <person name="Zhu C.Q."/>
            <person name="Sun F.Y."/>
            <person name="Dorjsuren D."/>
            <person name="Lin Y."/>
            <person name="Murakami S."/>
        </authorList>
    </citation>
    <scope>FUNCTION IN TRANSCRIPTIONAL REGULATION</scope>
    <scope>INTERACTION WITH GTF2F1 AND GTF2F2</scope>
</reference>
<reference key="7">
    <citation type="journal article" date="2003" name="Science">
        <title>Control of nutrient-sensitive transcription programs by the unconventional prefoldin URI.</title>
        <authorList>
            <person name="Gstaiger M."/>
            <person name="Luke B."/>
            <person name="Hess D."/>
            <person name="Oakeley E.J."/>
            <person name="Wirbelauer C."/>
            <person name="Blondel M."/>
            <person name="Vigneron M."/>
            <person name="Peter M."/>
            <person name="Krek W."/>
        </authorList>
    </citation>
    <scope>FUNCTION</scope>
    <scope>INTERACTION WITH PFDN2; PFDN4; POLR2E; RUVBL2; RUVBL1 AND STAP1</scope>
</reference>
<reference key="8">
    <citation type="journal article" date="2004" name="Mol. Cell. Biol.">
        <title>Subcellular localization of RPB5-mediating protein and its putative functional partner.</title>
        <authorList>
            <person name="Delgermaa L."/>
            <person name="Hayashi N."/>
            <person name="Dorjsuren D."/>
            <person name="Nomura T."/>
            <person name="Thuy le T.T."/>
            <person name="Murakami S."/>
        </authorList>
    </citation>
    <scope>FUNCTION</scope>
    <scope>INTERACTION WITH DMAP1</scope>
    <scope>SUBCELLULAR LOCATION</scope>
</reference>
<reference key="9">
    <citation type="journal article" date="2007" name="Mol. Cell">
        <title>S6K1-mediated disassembly of mitochondrial URI/PP1gamma complexes activates a negative feedback program that counters S6K1 survival signaling.</title>
        <authorList>
            <person name="Djouder N."/>
            <person name="Metzler S.C."/>
            <person name="Schmidt A."/>
            <person name="Wirbelauer C."/>
            <person name="Gstaiger M."/>
            <person name="Aebersold R."/>
            <person name="Hess D."/>
            <person name="Krek W."/>
        </authorList>
    </citation>
    <scope>FUNCTION IN DEPHOSPHORYLATION OF PPP1CC</scope>
    <scope>PHOSPHORYLATION AT SER-372 BY RPS6KB1</scope>
    <scope>MUTAGENESIS OF SER-372</scope>
    <scope>SUBCELLULAR LOCATION</scope>
    <scope>IDENTIFICATION BY MASS SPECTROMETRY</scope>
</reference>
<reference key="10">
    <citation type="journal article" date="2008" name="Proc. Natl. Acad. Sci. U.S.A.">
        <title>A quantitative atlas of mitotic phosphorylation.</title>
        <authorList>
            <person name="Dephoure N."/>
            <person name="Zhou C."/>
            <person name="Villen J."/>
            <person name="Beausoleil S.A."/>
            <person name="Bakalarski C.E."/>
            <person name="Elledge S.J."/>
            <person name="Gygi S.P."/>
        </authorList>
    </citation>
    <scope>PHOSPHORYLATION [LARGE SCALE ANALYSIS] AT SER-372</scope>
    <scope>IDENTIFICATION BY MASS SPECTROMETRY [LARGE SCALE ANALYSIS]</scope>
    <source>
        <tissue>Cervix carcinoma</tissue>
    </source>
</reference>
<reference key="11">
    <citation type="journal article" date="2011" name="BMC Syst. Biol.">
        <title>Initial characterization of the human central proteome.</title>
        <authorList>
            <person name="Burkard T.R."/>
            <person name="Planyavsky M."/>
            <person name="Kaupe I."/>
            <person name="Breitwieser F.P."/>
            <person name="Buerckstuemmer T."/>
            <person name="Bennett K.L."/>
            <person name="Superti-Furga G."/>
            <person name="Colinge J."/>
        </authorList>
    </citation>
    <scope>IDENTIFICATION BY MASS SPECTROMETRY [LARGE SCALE ANALYSIS]</scope>
</reference>
<reference key="12">
    <citation type="journal article" date="2011" name="Cancer Cell">
        <title>URI is an oncogene amplified in ovarian cancer cells and is required for their survival.</title>
        <authorList>
            <person name="Theurillat J.P."/>
            <person name="Metzler S.C."/>
            <person name="Henzi N."/>
            <person name="Djouder N."/>
            <person name="Helbling M."/>
            <person name="Zimmermann A.K."/>
            <person name="Jacob F."/>
            <person name="Soltermann A."/>
            <person name="Caduff R."/>
            <person name="Heinzelmann-Schwarz V."/>
            <person name="Moch H."/>
            <person name="Krek W."/>
        </authorList>
    </citation>
    <scope>FUNCTION</scope>
    <scope>INTERACTION WITH PPP1CC</scope>
    <scope>PHOSPHORYLATION AT SER-372</scope>
    <scope>MUTAGENESIS OF SER-372</scope>
    <scope>TISSUE SPECIFICITY</scope>
</reference>
<reference key="13">
    <citation type="journal article" date="2011" name="Mol. Cell. Biol.">
        <title>Regulation of androgen receptor-mediated transcription by RPB5 binding protein URI/RMP.</title>
        <authorList>
            <person name="Mita P."/>
            <person name="Savas J.N."/>
            <person name="Djouder N."/>
            <person name="Yates J.R. III"/>
            <person name="Ha S."/>
            <person name="Ruoff R."/>
            <person name="Schafler E.D."/>
            <person name="Nwachukwu J.C."/>
            <person name="Tanese N."/>
            <person name="Cowan N.J."/>
            <person name="Zavadil J."/>
            <person name="Garabedian M.J."/>
            <person name="Logan S.K."/>
        </authorList>
    </citation>
    <scope>FUNCTION IN TRANSCRIPTIONAL REGULATION</scope>
    <scope>INTERACTION WITH UXT</scope>
    <scope>PHOSPHORYLATION</scope>
    <scope>TISSUE SPECIFICITY</scope>
</reference>
<reference key="14">
    <citation type="journal article" date="2011" name="Sci. Signal.">
        <title>System-wide temporal characterization of the proteome and phosphoproteome of human embryonic stem cell differentiation.</title>
        <authorList>
            <person name="Rigbolt K.T."/>
            <person name="Prokhorova T.A."/>
            <person name="Akimov V."/>
            <person name="Henningsen J."/>
            <person name="Johansen P.T."/>
            <person name="Kratchmarova I."/>
            <person name="Kassem M."/>
            <person name="Mann M."/>
            <person name="Olsen J.V."/>
            <person name="Blagoev B."/>
        </authorList>
    </citation>
    <scope>IDENTIFICATION BY MASS SPECTROMETRY [LARGE SCALE ANALYSIS]</scope>
</reference>
<reference key="15">
    <citation type="journal article" date="2012" name="Proc. Natl. Acad. Sci. U.S.A.">
        <title>N-terminal acetylome analyses and functional insights of the N-terminal acetyltransferase NatB.</title>
        <authorList>
            <person name="Van Damme P."/>
            <person name="Lasa M."/>
            <person name="Polevoda B."/>
            <person name="Gazquez C."/>
            <person name="Elosegui-Artola A."/>
            <person name="Kim D.S."/>
            <person name="De Juan-Pardo E."/>
            <person name="Demeyer K."/>
            <person name="Hole K."/>
            <person name="Larrea E."/>
            <person name="Timmerman E."/>
            <person name="Prieto J."/>
            <person name="Arnesen T."/>
            <person name="Sherman F."/>
            <person name="Gevaert K."/>
            <person name="Aldabe R."/>
        </authorList>
    </citation>
    <scope>ACETYLATION [LARGE SCALE ANALYSIS] AT MET-1</scope>
    <scope>IDENTIFICATION BY MASS SPECTROMETRY [LARGE SCALE ANALYSIS]</scope>
</reference>
<reference key="16">
    <citation type="journal article" date="2013" name="J. Proteome Res.">
        <title>Toward a comprehensive characterization of a human cancer cell phosphoproteome.</title>
        <authorList>
            <person name="Zhou H."/>
            <person name="Di Palma S."/>
            <person name="Preisinger C."/>
            <person name="Peng M."/>
            <person name="Polat A.N."/>
            <person name="Heck A.J."/>
            <person name="Mohammed S."/>
        </authorList>
    </citation>
    <scope>PHOSPHORYLATION [LARGE SCALE ANALYSIS] AT SER-372; THR-373 AND SER-442</scope>
    <scope>IDENTIFICATION BY MASS SPECTROMETRY [LARGE SCALE ANALYSIS]</scope>
    <source>
        <tissue>Cervix carcinoma</tissue>
        <tissue>Erythroleukemia</tissue>
    </source>
</reference>
<reference key="17">
    <citation type="journal article" date="2017" name="Nat. Commun.">
        <title>R2TP/Prefoldin-like component RUVBL1/RUVBL2 directly interacts with ZNHIT2 to regulate assembly of U5 small nuclear ribonucleoprotein.</title>
        <authorList>
            <person name="Cloutier P."/>
            <person name="Poitras C."/>
            <person name="Durand M."/>
            <person name="Hekmat O."/>
            <person name="Fiola-Masson E."/>
            <person name="Bouchard A."/>
            <person name="Faubert D."/>
            <person name="Chabot B."/>
            <person name="Coulombe B."/>
        </authorList>
    </citation>
    <scope>INTERACTION WITH TSC1; TSC2; PRPF8 AND EFTUD2</scope>
</reference>
<reference key="18">
    <citation type="journal article" date="2020" name="J. Proteome Res.">
        <title>Upstream ORF-Encoded ASDURF Is a Novel Prefoldin-like Subunit of the PAQosome.</title>
        <authorList>
            <person name="Cloutier P."/>
            <person name="Poitras C."/>
            <person name="Faubert D."/>
            <person name="Bouchard A."/>
            <person name="Blanchette M."/>
            <person name="Gauthier M.S."/>
            <person name="Coulombe B."/>
        </authorList>
    </citation>
    <scope>IDENTIFICATION IN THE PAQOSOME COMPLEX</scope>
</reference>